<organism>
    <name type="scientific">Pseudoalteromonas phage PM2</name>
    <name type="common">Bacteriophage PM2</name>
    <dbReference type="NCBI Taxonomy" id="2905728"/>
    <lineage>
        <taxon>Viruses</taxon>
        <taxon>Varidnaviria</taxon>
        <taxon>Bamfordvirae</taxon>
        <taxon>Preplasmiviricota</taxon>
        <taxon>Tectiliviricetes</taxon>
        <taxon>Vinavirales</taxon>
        <taxon>Corticoviridae</taxon>
        <taxon>Corticovirus</taxon>
        <taxon>Corticovirus PM2</taxon>
    </lineage>
</organism>
<keyword id="KW-1185">Reference proteome</keyword>
<gene>
    <name type="ORF">h</name>
</gene>
<accession>Q9XJS0</accession>
<dbReference type="EMBL" id="AF155037">
    <property type="protein sequence ID" value="AAD43546.1"/>
    <property type="molecule type" value="Genomic_DNA"/>
</dbReference>
<dbReference type="RefSeq" id="NP_049899.1">
    <property type="nucleotide sequence ID" value="NC_000867.1"/>
</dbReference>
<dbReference type="KEGG" id="vg:1262040"/>
<dbReference type="Proteomes" id="UP000002136">
    <property type="component" value="Genome"/>
</dbReference>
<name>GPH_BPPM2</name>
<evidence type="ECO:0000256" key="1">
    <source>
        <dbReference type="SAM" id="MobiDB-lite"/>
    </source>
</evidence>
<proteinExistence type="predicted"/>
<reference key="1">
    <citation type="journal article" date="1999" name="Virology">
        <title>The complete genome sequence of PM2, the first lipid-containing bacterial virus to be isolated.</title>
        <authorList>
            <person name="Maennistoe R.H."/>
            <person name="Kivelae H.M."/>
            <person name="Paulin L."/>
            <person name="Bamford D.H."/>
            <person name="Bamford J.K."/>
        </authorList>
    </citation>
    <scope>NUCLEOTIDE SEQUENCE [GENOMIC DNA]</scope>
</reference>
<protein>
    <recommendedName>
        <fullName>Uncharacterized protein Gp-h</fullName>
    </recommendedName>
</protein>
<feature type="chain" id="PRO_0000339915" description="Uncharacterized protein Gp-h">
    <location>
        <begin position="1"/>
        <end position="143"/>
    </location>
</feature>
<feature type="region of interest" description="Disordered" evidence="1">
    <location>
        <begin position="1"/>
        <end position="25"/>
    </location>
</feature>
<feature type="compositionally biased region" description="Basic and acidic residues" evidence="1">
    <location>
        <begin position="1"/>
        <end position="14"/>
    </location>
</feature>
<organismHost>
    <name type="scientific">Pseudoalteromonas espejiana</name>
    <dbReference type="NCBI Taxonomy" id="28107"/>
</organismHost>
<sequence length="143" mass="15702">MPAAKKQIEEKPEVEQDLGAPDFSDLLDDDEKTLIDSVVNDDDESDELTDDAIGMAVGELVGMGVMFLTDYLAERRGEHWNVSTKELKQLAKAVDGSVPDTELSPAWALVAVSVGMFAPRVVVDIQLNKRKVIEVENDDKKAD</sequence>